<gene>
    <name evidence="1" type="primary">hemA</name>
    <name type="ordered locus">EcE24377A_1358</name>
</gene>
<name>HEM1_ECO24</name>
<sequence length="418" mass="46330">MTLLALGINHKTAPVSLRERVSFSPDKLDQALDSLLAQPMVQGGVVLSTCNRTELYLSVEEQDNLQEALIRWLCDYHNLNEEDLRKSLYWHQDNDAVSHLMRVASGLDSLVLGEPQILGQVKKAFADSQKGHMKASELERMFQKSFSVAKRVRTETDIGASAVSVAFAACTLARQIFESLSTVTVLLVGAGETIELVARHLREHKVQKMIIANRTRERAQILADEVGAEVIALSEIDERLREADIIISSTASPLPIIGKGMVERALKSRRNQPMLLVDIAVPRDVEPEVGKLANAYLYSVDDLQSIISHNLAQRKAAAVEAETIVAQETSEFMAWLRAQSASETIREYRSQAEHVRDELTAKALAALEQGGDAQAIMQDLAWKLTNRLIHAPTKSLQQAARDGDNERLNILRDSLGLE</sequence>
<organism>
    <name type="scientific">Escherichia coli O139:H28 (strain E24377A / ETEC)</name>
    <dbReference type="NCBI Taxonomy" id="331111"/>
    <lineage>
        <taxon>Bacteria</taxon>
        <taxon>Pseudomonadati</taxon>
        <taxon>Pseudomonadota</taxon>
        <taxon>Gammaproteobacteria</taxon>
        <taxon>Enterobacterales</taxon>
        <taxon>Enterobacteriaceae</taxon>
        <taxon>Escherichia</taxon>
    </lineage>
</organism>
<keyword id="KW-0521">NADP</keyword>
<keyword id="KW-0560">Oxidoreductase</keyword>
<keyword id="KW-0627">Porphyrin biosynthesis</keyword>
<keyword id="KW-1185">Reference proteome</keyword>
<protein>
    <recommendedName>
        <fullName evidence="1">Glutamyl-tRNA reductase</fullName>
        <shortName evidence="1">GluTR</shortName>
        <ecNumber evidence="1">1.2.1.70</ecNumber>
    </recommendedName>
</protein>
<reference key="1">
    <citation type="journal article" date="2008" name="J. Bacteriol.">
        <title>The pangenome structure of Escherichia coli: comparative genomic analysis of E. coli commensal and pathogenic isolates.</title>
        <authorList>
            <person name="Rasko D.A."/>
            <person name="Rosovitz M.J."/>
            <person name="Myers G.S.A."/>
            <person name="Mongodin E.F."/>
            <person name="Fricke W.F."/>
            <person name="Gajer P."/>
            <person name="Crabtree J."/>
            <person name="Sebaihia M."/>
            <person name="Thomson N.R."/>
            <person name="Chaudhuri R."/>
            <person name="Henderson I.R."/>
            <person name="Sperandio V."/>
            <person name="Ravel J."/>
        </authorList>
    </citation>
    <scope>NUCLEOTIDE SEQUENCE [LARGE SCALE GENOMIC DNA]</scope>
    <source>
        <strain>E24377A / ETEC</strain>
    </source>
</reference>
<feature type="chain" id="PRO_1000057574" description="Glutamyl-tRNA reductase">
    <location>
        <begin position="1"/>
        <end position="418"/>
    </location>
</feature>
<feature type="active site" description="Nucleophile" evidence="1">
    <location>
        <position position="50"/>
    </location>
</feature>
<feature type="binding site" evidence="1">
    <location>
        <begin position="49"/>
        <end position="52"/>
    </location>
    <ligand>
        <name>substrate</name>
    </ligand>
</feature>
<feature type="binding site" evidence="1">
    <location>
        <position position="109"/>
    </location>
    <ligand>
        <name>substrate</name>
    </ligand>
</feature>
<feature type="binding site" evidence="1">
    <location>
        <begin position="114"/>
        <end position="116"/>
    </location>
    <ligand>
        <name>substrate</name>
    </ligand>
</feature>
<feature type="binding site" evidence="1">
    <location>
        <position position="120"/>
    </location>
    <ligand>
        <name>substrate</name>
    </ligand>
</feature>
<feature type="binding site" evidence="1">
    <location>
        <begin position="189"/>
        <end position="194"/>
    </location>
    <ligand>
        <name>NADP(+)</name>
        <dbReference type="ChEBI" id="CHEBI:58349"/>
    </ligand>
</feature>
<feature type="site" description="Important for activity" evidence="1">
    <location>
        <position position="99"/>
    </location>
</feature>
<evidence type="ECO:0000255" key="1">
    <source>
        <dbReference type="HAMAP-Rule" id="MF_00087"/>
    </source>
</evidence>
<dbReference type="EC" id="1.2.1.70" evidence="1"/>
<dbReference type="EMBL" id="CP000800">
    <property type="protein sequence ID" value="ABV20536.1"/>
    <property type="molecule type" value="Genomic_DNA"/>
</dbReference>
<dbReference type="RefSeq" id="WP_000173200.1">
    <property type="nucleotide sequence ID" value="NC_009801.1"/>
</dbReference>
<dbReference type="SMR" id="A7ZKY4"/>
<dbReference type="GeneID" id="93775275"/>
<dbReference type="KEGG" id="ecw:EcE24377A_1358"/>
<dbReference type="HOGENOM" id="CLU_035113_2_2_6"/>
<dbReference type="UniPathway" id="UPA00251">
    <property type="reaction ID" value="UER00316"/>
</dbReference>
<dbReference type="Proteomes" id="UP000001122">
    <property type="component" value="Chromosome"/>
</dbReference>
<dbReference type="GO" id="GO:0008883">
    <property type="term" value="F:glutamyl-tRNA reductase activity"/>
    <property type="evidence" value="ECO:0007669"/>
    <property type="project" value="UniProtKB-UniRule"/>
</dbReference>
<dbReference type="GO" id="GO:0050661">
    <property type="term" value="F:NADP binding"/>
    <property type="evidence" value="ECO:0007669"/>
    <property type="project" value="InterPro"/>
</dbReference>
<dbReference type="GO" id="GO:0019353">
    <property type="term" value="P:protoporphyrinogen IX biosynthetic process from glutamate"/>
    <property type="evidence" value="ECO:0007669"/>
    <property type="project" value="TreeGrafter"/>
</dbReference>
<dbReference type="CDD" id="cd05213">
    <property type="entry name" value="NAD_bind_Glutamyl_tRNA_reduct"/>
    <property type="match status" value="1"/>
</dbReference>
<dbReference type="FunFam" id="3.30.460.30:FF:000001">
    <property type="entry name" value="Glutamyl-tRNA reductase"/>
    <property type="match status" value="1"/>
</dbReference>
<dbReference type="FunFam" id="3.40.50.720:FF:000031">
    <property type="entry name" value="Glutamyl-tRNA reductase"/>
    <property type="match status" value="1"/>
</dbReference>
<dbReference type="Gene3D" id="3.30.460.30">
    <property type="entry name" value="Glutamyl-tRNA reductase, N-terminal domain"/>
    <property type="match status" value="1"/>
</dbReference>
<dbReference type="Gene3D" id="3.40.50.720">
    <property type="entry name" value="NAD(P)-binding Rossmann-like Domain"/>
    <property type="match status" value="1"/>
</dbReference>
<dbReference type="HAMAP" id="MF_00087">
    <property type="entry name" value="Glu_tRNA_reductase"/>
    <property type="match status" value="1"/>
</dbReference>
<dbReference type="InterPro" id="IPR000343">
    <property type="entry name" value="4pyrrol_synth_GluRdtase"/>
</dbReference>
<dbReference type="InterPro" id="IPR015896">
    <property type="entry name" value="4pyrrol_synth_GluRdtase_dimer"/>
</dbReference>
<dbReference type="InterPro" id="IPR015895">
    <property type="entry name" value="4pyrrol_synth_GluRdtase_N"/>
</dbReference>
<dbReference type="InterPro" id="IPR018214">
    <property type="entry name" value="GluRdtase_CS"/>
</dbReference>
<dbReference type="InterPro" id="IPR036453">
    <property type="entry name" value="GluRdtase_dimer_dom_sf"/>
</dbReference>
<dbReference type="InterPro" id="IPR036343">
    <property type="entry name" value="GluRdtase_N_sf"/>
</dbReference>
<dbReference type="InterPro" id="IPR036291">
    <property type="entry name" value="NAD(P)-bd_dom_sf"/>
</dbReference>
<dbReference type="InterPro" id="IPR006151">
    <property type="entry name" value="Shikm_DH/Glu-tRNA_Rdtase"/>
</dbReference>
<dbReference type="NCBIfam" id="TIGR01035">
    <property type="entry name" value="hemA"/>
    <property type="match status" value="1"/>
</dbReference>
<dbReference type="PANTHER" id="PTHR43013">
    <property type="entry name" value="GLUTAMYL-TRNA REDUCTASE"/>
    <property type="match status" value="1"/>
</dbReference>
<dbReference type="PANTHER" id="PTHR43013:SF1">
    <property type="entry name" value="GLUTAMYL-TRNA REDUCTASE"/>
    <property type="match status" value="1"/>
</dbReference>
<dbReference type="Pfam" id="PF00745">
    <property type="entry name" value="GlutR_dimer"/>
    <property type="match status" value="1"/>
</dbReference>
<dbReference type="Pfam" id="PF05201">
    <property type="entry name" value="GlutR_N"/>
    <property type="match status" value="1"/>
</dbReference>
<dbReference type="Pfam" id="PF01488">
    <property type="entry name" value="Shikimate_DH"/>
    <property type="match status" value="1"/>
</dbReference>
<dbReference type="PIRSF" id="PIRSF000445">
    <property type="entry name" value="4pyrrol_synth_GluRdtase"/>
    <property type="match status" value="1"/>
</dbReference>
<dbReference type="SUPFAM" id="SSF69742">
    <property type="entry name" value="Glutamyl tRNA-reductase catalytic, N-terminal domain"/>
    <property type="match status" value="1"/>
</dbReference>
<dbReference type="SUPFAM" id="SSF69075">
    <property type="entry name" value="Glutamyl tRNA-reductase dimerization domain"/>
    <property type="match status" value="1"/>
</dbReference>
<dbReference type="SUPFAM" id="SSF51735">
    <property type="entry name" value="NAD(P)-binding Rossmann-fold domains"/>
    <property type="match status" value="1"/>
</dbReference>
<dbReference type="PROSITE" id="PS00747">
    <property type="entry name" value="GLUTR"/>
    <property type="match status" value="1"/>
</dbReference>
<proteinExistence type="inferred from homology"/>
<comment type="function">
    <text evidence="1">Catalyzes the NADPH-dependent reduction of glutamyl-tRNA(Glu) to glutamate 1-semialdehyde (GSA).</text>
</comment>
<comment type="catalytic activity">
    <reaction evidence="1">
        <text>(S)-4-amino-5-oxopentanoate + tRNA(Glu) + NADP(+) = L-glutamyl-tRNA(Glu) + NADPH + H(+)</text>
        <dbReference type="Rhea" id="RHEA:12344"/>
        <dbReference type="Rhea" id="RHEA-COMP:9663"/>
        <dbReference type="Rhea" id="RHEA-COMP:9680"/>
        <dbReference type="ChEBI" id="CHEBI:15378"/>
        <dbReference type="ChEBI" id="CHEBI:57501"/>
        <dbReference type="ChEBI" id="CHEBI:57783"/>
        <dbReference type="ChEBI" id="CHEBI:58349"/>
        <dbReference type="ChEBI" id="CHEBI:78442"/>
        <dbReference type="ChEBI" id="CHEBI:78520"/>
        <dbReference type="EC" id="1.2.1.70"/>
    </reaction>
</comment>
<comment type="pathway">
    <text evidence="1">Porphyrin-containing compound metabolism; protoporphyrin-IX biosynthesis; 5-aminolevulinate from L-glutamyl-tRNA(Glu): step 1/2.</text>
</comment>
<comment type="subunit">
    <text evidence="1">Homodimer.</text>
</comment>
<comment type="domain">
    <text evidence="1">Possesses an unusual extended V-shaped dimeric structure with each monomer consisting of three distinct domains arranged along a curved 'spinal' alpha-helix. The N-terminal catalytic domain specifically recognizes the glutamate moiety of the substrate. The second domain is the NADPH-binding domain, and the third C-terminal domain is responsible for dimerization.</text>
</comment>
<comment type="miscellaneous">
    <text evidence="1">During catalysis, the active site Cys acts as a nucleophile attacking the alpha-carbonyl group of tRNA-bound glutamate with the formation of a thioester intermediate between enzyme and glutamate, and the concomitant release of tRNA(Glu). The thioester intermediate is finally reduced by direct hydride transfer from NADPH, to form the product GSA.</text>
</comment>
<comment type="similarity">
    <text evidence="1">Belongs to the glutamyl-tRNA reductase family.</text>
</comment>
<accession>A7ZKY4</accession>